<dbReference type="EMBL" id="AB095947">
    <property type="protein sequence ID" value="BAC23123.2"/>
    <property type="status" value="ALT_INIT"/>
    <property type="molecule type" value="mRNA"/>
</dbReference>
<dbReference type="EMBL" id="AK124616">
    <property type="protein sequence ID" value="BAC85902.1"/>
    <property type="molecule type" value="mRNA"/>
</dbReference>
<dbReference type="CCDS" id="CCDS34030.1"/>
<dbReference type="RefSeq" id="NP_938022.2">
    <property type="nucleotide sequence ID" value="NM_198281.3"/>
</dbReference>
<dbReference type="RefSeq" id="XP_005262993.1">
    <property type="nucleotide sequence ID" value="XM_005262936.4"/>
</dbReference>
<dbReference type="RefSeq" id="XP_005262994.1">
    <property type="nucleotide sequence ID" value="XM_005262937.5"/>
</dbReference>
<dbReference type="RefSeq" id="XP_016863532.1">
    <property type="nucleotide sequence ID" value="XM_017008043.2"/>
</dbReference>
<dbReference type="RefSeq" id="XP_016863533.1">
    <property type="nucleotide sequence ID" value="XM_017008044.2"/>
</dbReference>
<dbReference type="RefSeq" id="XP_047306045.1">
    <property type="nucleotide sequence ID" value="XM_047450089.1"/>
</dbReference>
<dbReference type="RefSeq" id="XP_047306046.1">
    <property type="nucleotide sequence ID" value="XM_047450090.1"/>
</dbReference>
<dbReference type="RefSeq" id="XP_047306047.1">
    <property type="nucleotide sequence ID" value="XM_047450091.1"/>
</dbReference>
<dbReference type="RefSeq" id="XP_047306048.1">
    <property type="nucleotide sequence ID" value="XM_047450092.1"/>
</dbReference>
<dbReference type="RefSeq" id="XP_047306049.1">
    <property type="nucleotide sequence ID" value="XM_047450093.1"/>
</dbReference>
<dbReference type="RefSeq" id="XP_054205701.1">
    <property type="nucleotide sequence ID" value="XM_054349726.1"/>
</dbReference>
<dbReference type="RefSeq" id="XP_054205702.1">
    <property type="nucleotide sequence ID" value="XM_054349727.1"/>
</dbReference>
<dbReference type="RefSeq" id="XP_054205703.1">
    <property type="nucleotide sequence ID" value="XM_054349728.1"/>
</dbReference>
<dbReference type="RefSeq" id="XP_054205704.1">
    <property type="nucleotide sequence ID" value="XM_054349729.1"/>
</dbReference>
<dbReference type="RefSeq" id="XP_054205705.1">
    <property type="nucleotide sequence ID" value="XM_054349730.1"/>
</dbReference>
<dbReference type="RefSeq" id="XP_054205706.1">
    <property type="nucleotide sequence ID" value="XM_054349731.1"/>
</dbReference>
<dbReference type="RefSeq" id="XP_054205707.1">
    <property type="nucleotide sequence ID" value="XM_054349732.1"/>
</dbReference>
<dbReference type="BioGRID" id="130131">
    <property type="interactions" value="49"/>
</dbReference>
<dbReference type="FunCoup" id="Q6ZVF9">
    <property type="interactions" value="901"/>
</dbReference>
<dbReference type="IntAct" id="Q6ZVF9">
    <property type="interactions" value="11"/>
</dbReference>
<dbReference type="MINT" id="Q6ZVF9"/>
<dbReference type="STRING" id="9606.ENSP00000476603"/>
<dbReference type="GlyGen" id="Q6ZVF9">
    <property type="glycosylation" value="2 sites"/>
</dbReference>
<dbReference type="iPTMnet" id="Q6ZVF9"/>
<dbReference type="PhosphoSitePlus" id="Q6ZVF9"/>
<dbReference type="SwissPalm" id="Q6ZVF9"/>
<dbReference type="BioMuta" id="GPRIN3"/>
<dbReference type="DMDM" id="115502242"/>
<dbReference type="jPOST" id="Q6ZVF9"/>
<dbReference type="MassIVE" id="Q6ZVF9"/>
<dbReference type="PaxDb" id="9606-ENSP00000476603"/>
<dbReference type="PeptideAtlas" id="Q6ZVF9"/>
<dbReference type="ProteomicsDB" id="68413"/>
<dbReference type="Pumba" id="Q6ZVF9"/>
<dbReference type="Antibodypedia" id="44913">
    <property type="antibodies" value="129 antibodies from 29 providers"/>
</dbReference>
<dbReference type="DNASU" id="285513"/>
<dbReference type="Ensembl" id="ENST00000333209.4">
    <property type="protein sequence ID" value="ENSP00000328672.3"/>
    <property type="gene ID" value="ENSG00000185477.6"/>
</dbReference>
<dbReference type="Ensembl" id="ENST00000609438.2">
    <property type="protein sequence ID" value="ENSP00000476603.1"/>
    <property type="gene ID" value="ENSG00000185477.6"/>
</dbReference>
<dbReference type="Ensembl" id="ENST00000715382.1">
    <property type="protein sequence ID" value="ENSP00000520450.1"/>
    <property type="gene ID" value="ENSG00000185477.6"/>
</dbReference>
<dbReference type="GeneID" id="285513"/>
<dbReference type="KEGG" id="hsa:285513"/>
<dbReference type="MANE-Select" id="ENST00000609438.2">
    <property type="protein sequence ID" value="ENSP00000476603.1"/>
    <property type="RefSeq nucleotide sequence ID" value="NM_198281.3"/>
    <property type="RefSeq protein sequence ID" value="NP_938022.2"/>
</dbReference>
<dbReference type="UCSC" id="uc003hsm.2">
    <property type="organism name" value="human"/>
</dbReference>
<dbReference type="AGR" id="HGNC:27733"/>
<dbReference type="CTD" id="285513"/>
<dbReference type="DisGeNET" id="285513"/>
<dbReference type="GeneCards" id="GPRIN3"/>
<dbReference type="HGNC" id="HGNC:27733">
    <property type="gene designation" value="GPRIN3"/>
</dbReference>
<dbReference type="HPA" id="ENSG00000185477">
    <property type="expression patterns" value="Tissue enhanced (brain)"/>
</dbReference>
<dbReference type="MIM" id="611241">
    <property type="type" value="gene"/>
</dbReference>
<dbReference type="neXtProt" id="NX_Q6ZVF9"/>
<dbReference type="OpenTargets" id="ENSG00000185477"/>
<dbReference type="PharmGKB" id="PA162390203"/>
<dbReference type="VEuPathDB" id="HostDB:ENSG00000185477"/>
<dbReference type="eggNOG" id="ENOG502QTMW">
    <property type="taxonomic scope" value="Eukaryota"/>
</dbReference>
<dbReference type="GeneTree" id="ENSGT00570000079168"/>
<dbReference type="HOGENOM" id="CLU_020316_0_0_1"/>
<dbReference type="InParanoid" id="Q6ZVF9"/>
<dbReference type="OMA" id="EQLHIIY"/>
<dbReference type="OrthoDB" id="10049175at2759"/>
<dbReference type="PAN-GO" id="Q6ZVF9">
    <property type="GO annotations" value="2 GO annotations based on evolutionary models"/>
</dbReference>
<dbReference type="PhylomeDB" id="Q6ZVF9"/>
<dbReference type="TreeFam" id="TF337047"/>
<dbReference type="PathwayCommons" id="Q6ZVF9"/>
<dbReference type="BioGRID-ORCS" id="285513">
    <property type="hits" value="11 hits in 1147 CRISPR screens"/>
</dbReference>
<dbReference type="ChiTaRS" id="GPRIN3">
    <property type="organism name" value="human"/>
</dbReference>
<dbReference type="GenomeRNAi" id="285513"/>
<dbReference type="Pharos" id="Q6ZVF9">
    <property type="development level" value="Tbio"/>
</dbReference>
<dbReference type="PRO" id="PR:Q6ZVF9"/>
<dbReference type="Proteomes" id="UP000005640">
    <property type="component" value="Chromosome 4"/>
</dbReference>
<dbReference type="RNAct" id="Q6ZVF9">
    <property type="molecule type" value="protein"/>
</dbReference>
<dbReference type="Bgee" id="ENSG00000185477">
    <property type="expression patterns" value="Expressed in epithelial cell of pancreas and 152 other cell types or tissues"/>
</dbReference>
<dbReference type="GO" id="GO:0005886">
    <property type="term" value="C:plasma membrane"/>
    <property type="evidence" value="ECO:0000318"/>
    <property type="project" value="GO_Central"/>
</dbReference>
<dbReference type="GO" id="GO:0045202">
    <property type="term" value="C:synapse"/>
    <property type="evidence" value="ECO:0007669"/>
    <property type="project" value="GOC"/>
</dbReference>
<dbReference type="GO" id="GO:0048667">
    <property type="term" value="P:cell morphogenesis involved in neuron differentiation"/>
    <property type="evidence" value="ECO:0007669"/>
    <property type="project" value="Ensembl"/>
</dbReference>
<dbReference type="GO" id="GO:0098976">
    <property type="term" value="P:excitatory chemical synaptic transmission"/>
    <property type="evidence" value="ECO:0007669"/>
    <property type="project" value="Ensembl"/>
</dbReference>
<dbReference type="GO" id="GO:0007626">
    <property type="term" value="P:locomotory behavior"/>
    <property type="evidence" value="ECO:0007669"/>
    <property type="project" value="Ensembl"/>
</dbReference>
<dbReference type="GO" id="GO:0031175">
    <property type="term" value="P:neuron projection development"/>
    <property type="evidence" value="ECO:0000318"/>
    <property type="project" value="GO_Central"/>
</dbReference>
<dbReference type="GO" id="GO:0019228">
    <property type="term" value="P:neuronal action potential"/>
    <property type="evidence" value="ECO:0007669"/>
    <property type="project" value="Ensembl"/>
</dbReference>
<dbReference type="GO" id="GO:0042220">
    <property type="term" value="P:response to cocaine"/>
    <property type="evidence" value="ECO:0007669"/>
    <property type="project" value="Ensembl"/>
</dbReference>
<dbReference type="GO" id="GO:0070561">
    <property type="term" value="P:vitamin D receptor signaling pathway"/>
    <property type="evidence" value="ECO:0007669"/>
    <property type="project" value="Ensembl"/>
</dbReference>
<dbReference type="InterPro" id="IPR026646">
    <property type="entry name" value="GPRIN2-like/GPRIN3"/>
</dbReference>
<dbReference type="InterPro" id="IPR032745">
    <property type="entry name" value="GRIN_C"/>
</dbReference>
<dbReference type="PANTHER" id="PTHR15718:SF6">
    <property type="entry name" value="G PROTEIN-REGULATED INDUCER OF NEURITE OUTGROWTH 3"/>
    <property type="match status" value="1"/>
</dbReference>
<dbReference type="PANTHER" id="PTHR15718">
    <property type="entry name" value="G PROTEIN-REGULATED INDUCER OF NEURITE OUTGROWTH C-TERMINAL DOMAIN-CONTAINING PROTEIN"/>
    <property type="match status" value="1"/>
</dbReference>
<dbReference type="Pfam" id="PF15235">
    <property type="entry name" value="GRIN_C"/>
    <property type="match status" value="1"/>
</dbReference>
<name>GRIN3_HUMAN</name>
<reference key="1">
    <citation type="submission" date="2002-11" db="EMBL/GenBank/DDBJ databases">
        <title>The nucleotide sequence of a long cDNA clone isolated from human.</title>
        <authorList>
            <person name="Nagase T."/>
            <person name="Kikuno R."/>
            <person name="Ohara O."/>
        </authorList>
    </citation>
    <scope>NUCLEOTIDE SEQUENCE [LARGE SCALE MRNA]</scope>
    <source>
        <tissue>Brain</tissue>
    </source>
</reference>
<reference key="2">
    <citation type="journal article" date="2004" name="Nat. Genet.">
        <title>Complete sequencing and characterization of 21,243 full-length human cDNAs.</title>
        <authorList>
            <person name="Ota T."/>
            <person name="Suzuki Y."/>
            <person name="Nishikawa T."/>
            <person name="Otsuki T."/>
            <person name="Sugiyama T."/>
            <person name="Irie R."/>
            <person name="Wakamatsu A."/>
            <person name="Hayashi K."/>
            <person name="Sato H."/>
            <person name="Nagai K."/>
            <person name="Kimura K."/>
            <person name="Makita H."/>
            <person name="Sekine M."/>
            <person name="Obayashi M."/>
            <person name="Nishi T."/>
            <person name="Shibahara T."/>
            <person name="Tanaka T."/>
            <person name="Ishii S."/>
            <person name="Yamamoto J."/>
            <person name="Saito K."/>
            <person name="Kawai Y."/>
            <person name="Isono Y."/>
            <person name="Nakamura Y."/>
            <person name="Nagahari K."/>
            <person name="Murakami K."/>
            <person name="Yasuda T."/>
            <person name="Iwayanagi T."/>
            <person name="Wagatsuma M."/>
            <person name="Shiratori A."/>
            <person name="Sudo H."/>
            <person name="Hosoiri T."/>
            <person name="Kaku Y."/>
            <person name="Kodaira H."/>
            <person name="Kondo H."/>
            <person name="Sugawara M."/>
            <person name="Takahashi M."/>
            <person name="Kanda K."/>
            <person name="Yokoi T."/>
            <person name="Furuya T."/>
            <person name="Kikkawa E."/>
            <person name="Omura Y."/>
            <person name="Abe K."/>
            <person name="Kamihara K."/>
            <person name="Katsuta N."/>
            <person name="Sato K."/>
            <person name="Tanikawa M."/>
            <person name="Yamazaki M."/>
            <person name="Ninomiya K."/>
            <person name="Ishibashi T."/>
            <person name="Yamashita H."/>
            <person name="Murakawa K."/>
            <person name="Fujimori K."/>
            <person name="Tanai H."/>
            <person name="Kimata M."/>
            <person name="Watanabe M."/>
            <person name="Hiraoka S."/>
            <person name="Chiba Y."/>
            <person name="Ishida S."/>
            <person name="Ono Y."/>
            <person name="Takiguchi S."/>
            <person name="Watanabe S."/>
            <person name="Yosida M."/>
            <person name="Hotuta T."/>
            <person name="Kusano J."/>
            <person name="Kanehori K."/>
            <person name="Takahashi-Fujii A."/>
            <person name="Hara H."/>
            <person name="Tanase T.-O."/>
            <person name="Nomura Y."/>
            <person name="Togiya S."/>
            <person name="Komai F."/>
            <person name="Hara R."/>
            <person name="Takeuchi K."/>
            <person name="Arita M."/>
            <person name="Imose N."/>
            <person name="Musashino K."/>
            <person name="Yuuki H."/>
            <person name="Oshima A."/>
            <person name="Sasaki N."/>
            <person name="Aotsuka S."/>
            <person name="Yoshikawa Y."/>
            <person name="Matsunawa H."/>
            <person name="Ichihara T."/>
            <person name="Shiohata N."/>
            <person name="Sano S."/>
            <person name="Moriya S."/>
            <person name="Momiyama H."/>
            <person name="Satoh N."/>
            <person name="Takami S."/>
            <person name="Terashima Y."/>
            <person name="Suzuki O."/>
            <person name="Nakagawa S."/>
            <person name="Senoh A."/>
            <person name="Mizoguchi H."/>
            <person name="Goto Y."/>
            <person name="Shimizu F."/>
            <person name="Wakebe H."/>
            <person name="Hishigaki H."/>
            <person name="Watanabe T."/>
            <person name="Sugiyama A."/>
            <person name="Takemoto M."/>
            <person name="Kawakami B."/>
            <person name="Yamazaki M."/>
            <person name="Watanabe K."/>
            <person name="Kumagai A."/>
            <person name="Itakura S."/>
            <person name="Fukuzumi Y."/>
            <person name="Fujimori Y."/>
            <person name="Komiyama M."/>
            <person name="Tashiro H."/>
            <person name="Tanigami A."/>
            <person name="Fujiwara T."/>
            <person name="Ono T."/>
            <person name="Yamada K."/>
            <person name="Fujii Y."/>
            <person name="Ozaki K."/>
            <person name="Hirao M."/>
            <person name="Ohmori Y."/>
            <person name="Kawabata A."/>
            <person name="Hikiji T."/>
            <person name="Kobatake N."/>
            <person name="Inagaki H."/>
            <person name="Ikema Y."/>
            <person name="Okamoto S."/>
            <person name="Okitani R."/>
            <person name="Kawakami T."/>
            <person name="Noguchi S."/>
            <person name="Itoh T."/>
            <person name="Shigeta K."/>
            <person name="Senba T."/>
            <person name="Matsumura K."/>
            <person name="Nakajima Y."/>
            <person name="Mizuno T."/>
            <person name="Morinaga M."/>
            <person name="Sasaki M."/>
            <person name="Togashi T."/>
            <person name="Oyama M."/>
            <person name="Hata H."/>
            <person name="Watanabe M."/>
            <person name="Komatsu T."/>
            <person name="Mizushima-Sugano J."/>
            <person name="Satoh T."/>
            <person name="Shirai Y."/>
            <person name="Takahashi Y."/>
            <person name="Nakagawa K."/>
            <person name="Okumura K."/>
            <person name="Nagase T."/>
            <person name="Nomura N."/>
            <person name="Kikuchi H."/>
            <person name="Masuho Y."/>
            <person name="Yamashita R."/>
            <person name="Nakai K."/>
            <person name="Yada T."/>
            <person name="Nakamura Y."/>
            <person name="Ohara O."/>
            <person name="Isogai T."/>
            <person name="Sugano S."/>
        </authorList>
    </citation>
    <scope>NUCLEOTIDE SEQUENCE [LARGE SCALE MRNA]</scope>
    <scope>VARIANT ALA-446</scope>
</reference>
<sequence>MGTVPDPLRSAKTSLIAASGKEDDLGEPQAASPRHRPALLCKNANGFSGAPAEPDLSPRAAAEALMQVCEHETTQPDMSSPGVFNEVQKAPATFNSPGNPQLPGSSQPAASAPSSAAGRDLIHTPLTMPANQHTCQSIPGDQPNAITSSMPEDSLMRSQRTSNREQPEKPSCPVGGVLSSSKDQVSCEFPSPETIQGTVQTPVTAARVVSHSSSPVGGPEGERQGAICDSEMRSCKPLTRESGCSENKQPSVTASGPQGTTSVTPQPTPLTSEPSACPPGPEKVPLPAQRQMSRFKEASTMTNQAESEIKEVPSRAWQDAEVQAVASVESRSVSTSPSILTAFLKESRAPEHFEQEQLRVICHSSGSHTLELSDSTLAPQESSQCPGIMPQVHIQAAAAESTAFQRENKLASLPGGVLKTSSINLVSSNAQHTCKEDGRLAGMTPVREESTAKKLAGTNSSSLKATAIDQISISACSQAETSYGLGKFETRPSEFAEKTTNGHKTDPDCKLSDSCGSISKADHSGSLDPTNKGDAREKKPASPQVVKEKESTGTDTSDAKTLLLNPKSQESGGTESAANPTPSPIRKNQESTLEENRQTKTATSLSLPSDPMGDSSPGSGKKTPSRSVKASPRRPSRVSEFLKEQKLNVTAAAAQVGLTPGDKKKQLGADSKLQLKQSKRVRDVVWDEQGMTWEVYGASLDAESLGIAIQNHLQRQIREHEKLIKTQNSQTRRSISSDTSSNKKLRGRQHSVFQSMLQNFRRPNCCVRPAPSSVLD</sequence>
<evidence type="ECO:0000250" key="1"/>
<evidence type="ECO:0000250" key="2">
    <source>
        <dbReference type="UniProtKB" id="Q8BWS5"/>
    </source>
</evidence>
<evidence type="ECO:0000256" key="3">
    <source>
        <dbReference type="SAM" id="MobiDB-lite"/>
    </source>
</evidence>
<evidence type="ECO:0000269" key="4">
    <source>
    </source>
</evidence>
<evidence type="ECO:0000305" key="5"/>
<keyword id="KW-0597">Phosphoprotein</keyword>
<keyword id="KW-1267">Proteomics identification</keyword>
<keyword id="KW-1185">Reference proteome</keyword>
<accession>Q6ZVF9</accession>
<accession>Q8IVE4</accession>
<feature type="chain" id="PRO_0000251950" description="G protein-regulated inducer of neurite outgrowth 3">
    <location>
        <begin position="1"/>
        <end position="776"/>
    </location>
</feature>
<feature type="region of interest" description="Disordered" evidence="3">
    <location>
        <begin position="1"/>
        <end position="37"/>
    </location>
</feature>
<feature type="region of interest" description="Disordered" evidence="3">
    <location>
        <begin position="68"/>
        <end position="312"/>
    </location>
</feature>
<feature type="region of interest" description="Disordered" evidence="3">
    <location>
        <begin position="518"/>
        <end position="637"/>
    </location>
</feature>
<feature type="region of interest" description="Disordered" evidence="3">
    <location>
        <begin position="723"/>
        <end position="748"/>
    </location>
</feature>
<feature type="compositionally biased region" description="Low complexity" evidence="3">
    <location>
        <begin position="101"/>
        <end position="118"/>
    </location>
</feature>
<feature type="compositionally biased region" description="Polar residues" evidence="3">
    <location>
        <begin position="129"/>
        <end position="161"/>
    </location>
</feature>
<feature type="compositionally biased region" description="Polar residues" evidence="3">
    <location>
        <begin position="193"/>
        <end position="203"/>
    </location>
</feature>
<feature type="compositionally biased region" description="Low complexity" evidence="3">
    <location>
        <begin position="208"/>
        <end position="217"/>
    </location>
</feature>
<feature type="compositionally biased region" description="Polar residues" evidence="3">
    <location>
        <begin position="242"/>
        <end position="274"/>
    </location>
</feature>
<feature type="compositionally biased region" description="Basic and acidic residues" evidence="3">
    <location>
        <begin position="520"/>
        <end position="552"/>
    </location>
</feature>
<feature type="compositionally biased region" description="Polar residues" evidence="3">
    <location>
        <begin position="566"/>
        <end position="580"/>
    </location>
</feature>
<feature type="compositionally biased region" description="Low complexity" evidence="3">
    <location>
        <begin position="604"/>
        <end position="620"/>
    </location>
</feature>
<feature type="compositionally biased region" description="Polar residues" evidence="3">
    <location>
        <begin position="725"/>
        <end position="742"/>
    </location>
</feature>
<feature type="modified residue" description="Phosphoserine" evidence="2">
    <location>
        <position position="332"/>
    </location>
</feature>
<feature type="modified residue" description="Phosphoserine" evidence="2">
    <location>
        <position position="365"/>
    </location>
</feature>
<feature type="sequence variant" id="VAR_051019" description="In dbSNP:rs11734353.">
    <original>L</original>
    <variation>V</variation>
    <location>
        <position position="39"/>
    </location>
</feature>
<feature type="sequence variant" id="VAR_051020" description="In dbSNP:rs6811370.">
    <original>A</original>
    <variation>V</variation>
    <location>
        <position position="378"/>
    </location>
</feature>
<feature type="sequence variant" id="VAR_051021" description="In dbSNP:rs28622301.">
    <original>S</original>
    <variation>P</variation>
    <location>
        <position position="382"/>
    </location>
</feature>
<feature type="sequence variant" id="VAR_051022" description="In dbSNP:rs11733183.">
    <original>P</original>
    <variation>S</variation>
    <location>
        <position position="390"/>
    </location>
</feature>
<feature type="sequence variant" id="VAR_051023" description="In dbSNP:rs7653897." evidence="4">
    <original>V</original>
    <variation>A</variation>
    <location>
        <position position="446"/>
    </location>
</feature>
<feature type="sequence variant" id="VAR_051024" description="In dbSNP:rs17015286.">
    <original>R</original>
    <variation>K</variation>
    <location>
        <position position="746"/>
    </location>
</feature>
<feature type="sequence conflict" description="In Ref. 2; BAC85902." evidence="5" ref="2">
    <original>H</original>
    <variation>R</variation>
    <location>
        <position position="363"/>
    </location>
</feature>
<protein>
    <recommendedName>
        <fullName>G protein-regulated inducer of neurite outgrowth 3</fullName>
        <shortName>GRIN3</shortName>
    </recommendedName>
</protein>
<proteinExistence type="evidence at protein level"/>
<organism>
    <name type="scientific">Homo sapiens</name>
    <name type="common">Human</name>
    <dbReference type="NCBI Taxonomy" id="9606"/>
    <lineage>
        <taxon>Eukaryota</taxon>
        <taxon>Metazoa</taxon>
        <taxon>Chordata</taxon>
        <taxon>Craniata</taxon>
        <taxon>Vertebrata</taxon>
        <taxon>Euteleostomi</taxon>
        <taxon>Mammalia</taxon>
        <taxon>Eutheria</taxon>
        <taxon>Euarchontoglires</taxon>
        <taxon>Primates</taxon>
        <taxon>Haplorrhini</taxon>
        <taxon>Catarrhini</taxon>
        <taxon>Hominidae</taxon>
        <taxon>Homo</taxon>
    </lineage>
</organism>
<comment type="function">
    <text evidence="1">May be involved in neurite outgrowth.</text>
</comment>
<comment type="sequence caution" evidence="5">
    <conflict type="erroneous initiation">
        <sequence resource="EMBL-CDS" id="BAC23123"/>
    </conflict>
</comment>
<gene>
    <name type="primary">GPRIN3</name>
    <name type="synonym">KIAA2027</name>
</gene>